<feature type="chain" id="PRO_0000130437" description="Large ribosomal subunit protein uL29">
    <location>
        <begin position="1"/>
        <end position="63"/>
    </location>
</feature>
<comment type="similarity">
    <text evidence="1">Belongs to the universal ribosomal protein uL29 family.</text>
</comment>
<evidence type="ECO:0000305" key="1"/>
<gene>
    <name type="primary">rpmC</name>
    <name type="ordered locus">PA4255</name>
</gene>
<name>RL29_PSEAE</name>
<protein>
    <recommendedName>
        <fullName evidence="1">Large ribosomal subunit protein uL29</fullName>
    </recommendedName>
    <alternativeName>
        <fullName>50S ribosomal protein L29</fullName>
    </alternativeName>
</protein>
<organism>
    <name type="scientific">Pseudomonas aeruginosa (strain ATCC 15692 / DSM 22644 / CIP 104116 / JCM 14847 / LMG 12228 / 1C / PRS 101 / PAO1)</name>
    <dbReference type="NCBI Taxonomy" id="208964"/>
    <lineage>
        <taxon>Bacteria</taxon>
        <taxon>Pseudomonadati</taxon>
        <taxon>Pseudomonadota</taxon>
        <taxon>Gammaproteobacteria</taxon>
        <taxon>Pseudomonadales</taxon>
        <taxon>Pseudomonadaceae</taxon>
        <taxon>Pseudomonas</taxon>
    </lineage>
</organism>
<dbReference type="EMBL" id="AE004091">
    <property type="protein sequence ID" value="AAG07643.1"/>
    <property type="molecule type" value="Genomic_DNA"/>
</dbReference>
<dbReference type="PIR" id="E83115">
    <property type="entry name" value="E83115"/>
</dbReference>
<dbReference type="RefSeq" id="NP_252945.1">
    <property type="nucleotide sequence ID" value="NC_002516.2"/>
</dbReference>
<dbReference type="RefSeq" id="WP_003093720.1">
    <property type="nucleotide sequence ID" value="NZ_QZGE01000028.1"/>
</dbReference>
<dbReference type="PDB" id="7UNR">
    <property type="method" value="EM"/>
    <property type="resolution" value="2.90 A"/>
    <property type="chains" value="1=1-63"/>
</dbReference>
<dbReference type="PDB" id="7UNU">
    <property type="method" value="EM"/>
    <property type="resolution" value="2.90 A"/>
    <property type="chains" value="1=1-63"/>
</dbReference>
<dbReference type="PDB" id="7UNV">
    <property type="method" value="EM"/>
    <property type="resolution" value="2.70 A"/>
    <property type="chains" value="1=1-63"/>
</dbReference>
<dbReference type="PDB" id="7UNW">
    <property type="method" value="EM"/>
    <property type="resolution" value="2.60 A"/>
    <property type="chains" value="1=1-63"/>
</dbReference>
<dbReference type="PDB" id="8CD1">
    <property type="method" value="EM"/>
    <property type="resolution" value="3.00 A"/>
    <property type="chains" value="Y=1-63"/>
</dbReference>
<dbReference type="PDB" id="8RWG">
    <property type="method" value="EM"/>
    <property type="resolution" value="2.46 A"/>
    <property type="chains" value="3=1-63"/>
</dbReference>
<dbReference type="PDBsum" id="7UNR"/>
<dbReference type="PDBsum" id="7UNU"/>
<dbReference type="PDBsum" id="7UNV"/>
<dbReference type="PDBsum" id="7UNW"/>
<dbReference type="PDBsum" id="8CD1"/>
<dbReference type="PDBsum" id="8RWG"/>
<dbReference type="EMDB" id="EMD-16566"/>
<dbReference type="EMDB" id="EMD-19547"/>
<dbReference type="EMDB" id="EMD-26630"/>
<dbReference type="EMDB" id="EMD-26633"/>
<dbReference type="EMDB" id="EMD-26634"/>
<dbReference type="EMDB" id="EMD-26635"/>
<dbReference type="SMR" id="Q9HWE3"/>
<dbReference type="FunCoup" id="Q9HWE3">
    <property type="interactions" value="559"/>
</dbReference>
<dbReference type="STRING" id="208964.PA4255"/>
<dbReference type="PaxDb" id="208964-PA4255"/>
<dbReference type="GeneID" id="79911813"/>
<dbReference type="GeneID" id="881771"/>
<dbReference type="KEGG" id="pae:PA4255"/>
<dbReference type="PATRIC" id="fig|208964.12.peg.4456"/>
<dbReference type="PseudoCAP" id="PA4255"/>
<dbReference type="HOGENOM" id="CLU_158491_1_2_6"/>
<dbReference type="InParanoid" id="Q9HWE3"/>
<dbReference type="OrthoDB" id="9815192at2"/>
<dbReference type="PhylomeDB" id="Q9HWE3"/>
<dbReference type="BioCyc" id="PAER208964:G1FZ6-4328-MONOMER"/>
<dbReference type="PRO" id="PR:Q9HWE3"/>
<dbReference type="Proteomes" id="UP000002438">
    <property type="component" value="Chromosome"/>
</dbReference>
<dbReference type="GO" id="GO:0022625">
    <property type="term" value="C:cytosolic large ribosomal subunit"/>
    <property type="evidence" value="ECO:0000318"/>
    <property type="project" value="GO_Central"/>
</dbReference>
<dbReference type="GO" id="GO:0003735">
    <property type="term" value="F:structural constituent of ribosome"/>
    <property type="evidence" value="ECO:0007669"/>
    <property type="project" value="InterPro"/>
</dbReference>
<dbReference type="GO" id="GO:0006412">
    <property type="term" value="P:translation"/>
    <property type="evidence" value="ECO:0007669"/>
    <property type="project" value="UniProtKB-UniRule"/>
</dbReference>
<dbReference type="CDD" id="cd00427">
    <property type="entry name" value="Ribosomal_L29_HIP"/>
    <property type="match status" value="1"/>
</dbReference>
<dbReference type="FunFam" id="1.10.287.310:FF:000001">
    <property type="entry name" value="50S ribosomal protein L29"/>
    <property type="match status" value="1"/>
</dbReference>
<dbReference type="Gene3D" id="1.10.287.310">
    <property type="match status" value="1"/>
</dbReference>
<dbReference type="HAMAP" id="MF_00374">
    <property type="entry name" value="Ribosomal_uL29"/>
    <property type="match status" value="1"/>
</dbReference>
<dbReference type="InterPro" id="IPR050063">
    <property type="entry name" value="Ribosomal_protein_uL29"/>
</dbReference>
<dbReference type="InterPro" id="IPR001854">
    <property type="entry name" value="Ribosomal_uL29"/>
</dbReference>
<dbReference type="InterPro" id="IPR018254">
    <property type="entry name" value="Ribosomal_uL29_CS"/>
</dbReference>
<dbReference type="InterPro" id="IPR036049">
    <property type="entry name" value="Ribosomal_uL29_sf"/>
</dbReference>
<dbReference type="NCBIfam" id="TIGR00012">
    <property type="entry name" value="L29"/>
    <property type="match status" value="1"/>
</dbReference>
<dbReference type="PANTHER" id="PTHR10916">
    <property type="entry name" value="60S RIBOSOMAL PROTEIN L35/50S RIBOSOMAL PROTEIN L29"/>
    <property type="match status" value="1"/>
</dbReference>
<dbReference type="PANTHER" id="PTHR10916:SF0">
    <property type="entry name" value="LARGE RIBOSOMAL SUBUNIT PROTEIN UL29C"/>
    <property type="match status" value="1"/>
</dbReference>
<dbReference type="Pfam" id="PF00831">
    <property type="entry name" value="Ribosomal_L29"/>
    <property type="match status" value="1"/>
</dbReference>
<dbReference type="SUPFAM" id="SSF46561">
    <property type="entry name" value="Ribosomal protein L29 (L29p)"/>
    <property type="match status" value="1"/>
</dbReference>
<dbReference type="PROSITE" id="PS00579">
    <property type="entry name" value="RIBOSOMAL_L29"/>
    <property type="match status" value="1"/>
</dbReference>
<sequence length="63" mass="7201">MKANELREKSVEQLNEQLLGLLRDQFNLRMQKATGQLGQSHLLSQVKRDIARVKTVLNQQAGK</sequence>
<accession>Q9HWE3</accession>
<accession>Q9R4Q0</accession>
<keyword id="KW-0002">3D-structure</keyword>
<keyword id="KW-0903">Direct protein sequencing</keyword>
<keyword id="KW-1185">Reference proteome</keyword>
<keyword id="KW-0687">Ribonucleoprotein</keyword>
<keyword id="KW-0689">Ribosomal protein</keyword>
<reference key="1">
    <citation type="journal article" date="2000" name="Nature">
        <title>Complete genome sequence of Pseudomonas aeruginosa PAO1, an opportunistic pathogen.</title>
        <authorList>
            <person name="Stover C.K."/>
            <person name="Pham X.-Q.T."/>
            <person name="Erwin A.L."/>
            <person name="Mizoguchi S.D."/>
            <person name="Warrener P."/>
            <person name="Hickey M.J."/>
            <person name="Brinkman F.S.L."/>
            <person name="Hufnagle W.O."/>
            <person name="Kowalik D.J."/>
            <person name="Lagrou M."/>
            <person name="Garber R.L."/>
            <person name="Goltry L."/>
            <person name="Tolentino E."/>
            <person name="Westbrock-Wadman S."/>
            <person name="Yuan Y."/>
            <person name="Brody L.L."/>
            <person name="Coulter S.N."/>
            <person name="Folger K.R."/>
            <person name="Kas A."/>
            <person name="Larbig K."/>
            <person name="Lim R.M."/>
            <person name="Smith K.A."/>
            <person name="Spencer D.H."/>
            <person name="Wong G.K.-S."/>
            <person name="Wu Z."/>
            <person name="Paulsen I.T."/>
            <person name="Reizer J."/>
            <person name="Saier M.H. Jr."/>
            <person name="Hancock R.E.W."/>
            <person name="Lory S."/>
            <person name="Olson M.V."/>
        </authorList>
    </citation>
    <scope>NUCLEOTIDE SEQUENCE [LARGE SCALE GENOMIC DNA]</scope>
    <source>
        <strain>ATCC 15692 / DSM 22644 / CIP 104116 / JCM 14847 / LMG 12228 / 1C / PRS 101 / PAO1</strain>
    </source>
</reference>
<reference key="2">
    <citation type="journal article" date="1995" name="Int. J. Syst. Bacteriol.">
        <title>Comparative ribosomal protein sequence analyses of a phylogenetically defined genus, Pseudomonas, and its relatives.</title>
        <authorList>
            <person name="Ochi K."/>
        </authorList>
    </citation>
    <scope>PROTEIN SEQUENCE OF 1-20</scope>
    <source>
        <strain>ATCC 10145 / DSM 50071 / JCM 5962 / LMG 1242 / NBRC 12689 / NCIMB 8295 / NRRL B-771</strain>
    </source>
</reference>
<proteinExistence type="evidence at protein level"/>